<keyword id="KW-0028">Amino-acid biosynthesis</keyword>
<keyword id="KW-0100">Branched-chain amino acid biosynthesis</keyword>
<keyword id="KW-0432">Leucine biosynthesis</keyword>
<keyword id="KW-0456">Lyase</keyword>
<keyword id="KW-1185">Reference proteome</keyword>
<reference key="1">
    <citation type="journal article" date="1995" name="Science">
        <title>Whole-genome random sequencing and assembly of Haemophilus influenzae Rd.</title>
        <authorList>
            <person name="Fleischmann R.D."/>
            <person name="Adams M.D."/>
            <person name="White O."/>
            <person name="Clayton R.A."/>
            <person name="Kirkness E.F."/>
            <person name="Kerlavage A.R."/>
            <person name="Bult C.J."/>
            <person name="Tomb J.-F."/>
            <person name="Dougherty B.A."/>
            <person name="Merrick J.M."/>
            <person name="McKenney K."/>
            <person name="Sutton G.G."/>
            <person name="FitzHugh W."/>
            <person name="Fields C.A."/>
            <person name="Gocayne J.D."/>
            <person name="Scott J.D."/>
            <person name="Shirley R."/>
            <person name="Liu L.-I."/>
            <person name="Glodek A."/>
            <person name="Kelley J.M."/>
            <person name="Weidman J.F."/>
            <person name="Phillips C.A."/>
            <person name="Spriggs T."/>
            <person name="Hedblom E."/>
            <person name="Cotton M.D."/>
            <person name="Utterback T.R."/>
            <person name="Hanna M.C."/>
            <person name="Nguyen D.T."/>
            <person name="Saudek D.M."/>
            <person name="Brandon R.C."/>
            <person name="Fine L.D."/>
            <person name="Fritchman J.L."/>
            <person name="Fuhrmann J.L."/>
            <person name="Geoghagen N.S.M."/>
            <person name="Gnehm C.L."/>
            <person name="McDonald L.A."/>
            <person name="Small K.V."/>
            <person name="Fraser C.M."/>
            <person name="Smith H.O."/>
            <person name="Venter J.C."/>
        </authorList>
    </citation>
    <scope>NUCLEOTIDE SEQUENCE [LARGE SCALE GENOMIC DNA]</scope>
    <source>
        <strain>ATCC 51907 / DSM 11121 / KW20 / Rd</strain>
    </source>
</reference>
<accession>P44438</accession>
<gene>
    <name type="primary">leuD</name>
    <name type="ordered locus">HI_0989</name>
</gene>
<evidence type="ECO:0000250" key="1"/>
<evidence type="ECO:0000305" key="2"/>
<proteinExistence type="inferred from homology"/>
<protein>
    <recommendedName>
        <fullName>3-isopropylmalate dehydratase small subunit</fullName>
        <ecNumber>4.2.1.33</ecNumber>
    </recommendedName>
    <alternativeName>
        <fullName>Alpha-IPM isomerase</fullName>
        <shortName>IPMI</shortName>
    </alternativeName>
    <alternativeName>
        <fullName>Isopropylmalate isomerase</fullName>
    </alternativeName>
</protein>
<feature type="chain" id="PRO_0000141824" description="3-isopropylmalate dehydratase small subunit">
    <location>
        <begin position="1"/>
        <end position="200"/>
    </location>
</feature>
<name>LEUD_HAEIN</name>
<organism>
    <name type="scientific">Haemophilus influenzae (strain ATCC 51907 / DSM 11121 / KW20 / Rd)</name>
    <dbReference type="NCBI Taxonomy" id="71421"/>
    <lineage>
        <taxon>Bacteria</taxon>
        <taxon>Pseudomonadati</taxon>
        <taxon>Pseudomonadota</taxon>
        <taxon>Gammaproteobacteria</taxon>
        <taxon>Pasteurellales</taxon>
        <taxon>Pasteurellaceae</taxon>
        <taxon>Haemophilus</taxon>
    </lineage>
</organism>
<comment type="function">
    <text evidence="1">Catalyzes the isomerization between 2-isopropylmalate and 3-isopropylmalate, via the formation of 2-isopropylmaleate.</text>
</comment>
<comment type="catalytic activity">
    <reaction>
        <text>(2R,3S)-3-isopropylmalate = (2S)-2-isopropylmalate</text>
        <dbReference type="Rhea" id="RHEA:32287"/>
        <dbReference type="ChEBI" id="CHEBI:1178"/>
        <dbReference type="ChEBI" id="CHEBI:35121"/>
        <dbReference type="EC" id="4.2.1.33"/>
    </reaction>
</comment>
<comment type="pathway">
    <text>Amino-acid biosynthesis; L-leucine biosynthesis; L-leucine from 3-methyl-2-oxobutanoate: step 2/4.</text>
</comment>
<comment type="subunit">
    <text evidence="1">Heterodimer of LeuC and LeuD.</text>
</comment>
<comment type="similarity">
    <text evidence="2">Belongs to the LeuD family. LeuD type 1 subfamily.</text>
</comment>
<dbReference type="EC" id="4.2.1.33"/>
<dbReference type="EMBL" id="L42023">
    <property type="protein sequence ID" value="AAC22650.1"/>
    <property type="molecule type" value="Genomic_DNA"/>
</dbReference>
<dbReference type="PIR" id="G64106">
    <property type="entry name" value="G64106"/>
</dbReference>
<dbReference type="RefSeq" id="NP_439152.1">
    <property type="nucleotide sequence ID" value="NC_000907.1"/>
</dbReference>
<dbReference type="SMR" id="P44438"/>
<dbReference type="STRING" id="71421.HI_0989"/>
<dbReference type="EnsemblBacteria" id="AAC22650">
    <property type="protein sequence ID" value="AAC22650"/>
    <property type="gene ID" value="HI_0989"/>
</dbReference>
<dbReference type="KEGG" id="hin:HI_0989"/>
<dbReference type="PATRIC" id="fig|71421.8.peg.1032"/>
<dbReference type="eggNOG" id="COG0066">
    <property type="taxonomic scope" value="Bacteria"/>
</dbReference>
<dbReference type="HOGENOM" id="CLU_081378_0_3_6"/>
<dbReference type="OrthoDB" id="9777465at2"/>
<dbReference type="PhylomeDB" id="P44438"/>
<dbReference type="BioCyc" id="HINF71421:G1GJ1-1031-MONOMER"/>
<dbReference type="UniPathway" id="UPA00048">
    <property type="reaction ID" value="UER00071"/>
</dbReference>
<dbReference type="Proteomes" id="UP000000579">
    <property type="component" value="Chromosome"/>
</dbReference>
<dbReference type="GO" id="GO:0009316">
    <property type="term" value="C:3-isopropylmalate dehydratase complex"/>
    <property type="evidence" value="ECO:0007669"/>
    <property type="project" value="InterPro"/>
</dbReference>
<dbReference type="GO" id="GO:0003861">
    <property type="term" value="F:3-isopropylmalate dehydratase activity"/>
    <property type="evidence" value="ECO:0007669"/>
    <property type="project" value="UniProtKB-UniRule"/>
</dbReference>
<dbReference type="GO" id="GO:0009098">
    <property type="term" value="P:L-leucine biosynthetic process"/>
    <property type="evidence" value="ECO:0007669"/>
    <property type="project" value="UniProtKB-UniRule"/>
</dbReference>
<dbReference type="CDD" id="cd01577">
    <property type="entry name" value="IPMI_Swivel"/>
    <property type="match status" value="1"/>
</dbReference>
<dbReference type="FunFam" id="3.20.19.10:FF:000003">
    <property type="entry name" value="3-isopropylmalate dehydratase small subunit"/>
    <property type="match status" value="1"/>
</dbReference>
<dbReference type="Gene3D" id="3.20.19.10">
    <property type="entry name" value="Aconitase, domain 4"/>
    <property type="match status" value="1"/>
</dbReference>
<dbReference type="HAMAP" id="MF_01031">
    <property type="entry name" value="LeuD_type1"/>
    <property type="match status" value="1"/>
</dbReference>
<dbReference type="InterPro" id="IPR004431">
    <property type="entry name" value="3-IsopropMal_deHydase_ssu"/>
</dbReference>
<dbReference type="InterPro" id="IPR015928">
    <property type="entry name" value="Aconitase/3IPM_dehydase_swvl"/>
</dbReference>
<dbReference type="InterPro" id="IPR000573">
    <property type="entry name" value="AconitaseA/IPMdHydase_ssu_swvl"/>
</dbReference>
<dbReference type="InterPro" id="IPR033940">
    <property type="entry name" value="IPMI_Swivel"/>
</dbReference>
<dbReference type="InterPro" id="IPR050075">
    <property type="entry name" value="LeuD"/>
</dbReference>
<dbReference type="NCBIfam" id="TIGR00171">
    <property type="entry name" value="leuD"/>
    <property type="match status" value="1"/>
</dbReference>
<dbReference type="NCBIfam" id="NF002458">
    <property type="entry name" value="PRK01641.1"/>
    <property type="match status" value="1"/>
</dbReference>
<dbReference type="PANTHER" id="PTHR43345:SF5">
    <property type="entry name" value="3-ISOPROPYLMALATE DEHYDRATASE SMALL SUBUNIT"/>
    <property type="match status" value="1"/>
</dbReference>
<dbReference type="PANTHER" id="PTHR43345">
    <property type="entry name" value="3-ISOPROPYLMALATE DEHYDRATASE SMALL SUBUNIT 2-RELATED-RELATED"/>
    <property type="match status" value="1"/>
</dbReference>
<dbReference type="Pfam" id="PF00694">
    <property type="entry name" value="Aconitase_C"/>
    <property type="match status" value="1"/>
</dbReference>
<dbReference type="SUPFAM" id="SSF52016">
    <property type="entry name" value="LeuD/IlvD-like"/>
    <property type="match status" value="1"/>
</dbReference>
<sequence length="200" mass="22812">MAGFKQLSGLVVPLDAANVDTDAIIPKQFLQAITRIGFGKHLFHEWRYLDVEGTKPNPEFVLNYPQYQGATILLARKNLGCGSSREHAPWALADYGFKVMIAPSFADIFYNNSLNNHMLPIRLSEEEVEEIFQWVWANEGKQIHVDLEAMTVTVGDKVYTFELDEFRRHCLLNGLDNIGLTLQHEDKISAYEKNIPAFLR</sequence>